<keyword id="KW-0963">Cytoplasm</keyword>
<keyword id="KW-0671">Queuosine biosynthesis</keyword>
<keyword id="KW-0949">S-adenosyl-L-methionine</keyword>
<keyword id="KW-0808">Transferase</keyword>
<sequence>MNTNDFDFELPEELIAQTPLEKRDSSKLLIIDHRQKTMVDSHFDHIIDQLNPGDALVMNNTRVLPARLYGEKPDTHGHVELLLLKNTQGDQWEVLAKPAKRLKVGSQVNFGDGRLKATIIDELEHGGRIVEFSYDGIFLEVLESLGEMPLPPYIHEKLEDAERYQTVYAKENGSAAAPTAGLHFTTDLLKKIEAKGVHLVYLTLHVGLGTFRPVSVDNLDEHDMHSEFYSLSEEAAQTLRDVKQAGGRVVAVGTTSIRTLETIGGKFQGDIQADSGWTNIFIKPGYQFKVVDAFSTNFHLPKSTLVMLVSAFAGRDFVLEAYRHAVDEKYRFFSFGDAMFVN</sequence>
<accession>Q48SR6</accession>
<proteinExistence type="inferred from homology"/>
<gene>
    <name evidence="1" type="primary">queA</name>
    <name type="ordered locus">M28_Spy1134</name>
</gene>
<dbReference type="EC" id="2.4.99.17" evidence="1"/>
<dbReference type="EMBL" id="CP000056">
    <property type="protein sequence ID" value="AAX72244.1"/>
    <property type="molecule type" value="Genomic_DNA"/>
</dbReference>
<dbReference type="RefSeq" id="WP_011284937.1">
    <property type="nucleotide sequence ID" value="NC_007296.2"/>
</dbReference>
<dbReference type="SMR" id="Q48SR6"/>
<dbReference type="KEGG" id="spb:M28_Spy1134"/>
<dbReference type="HOGENOM" id="CLU_039110_1_0_9"/>
<dbReference type="UniPathway" id="UPA00392"/>
<dbReference type="GO" id="GO:0005737">
    <property type="term" value="C:cytoplasm"/>
    <property type="evidence" value="ECO:0007669"/>
    <property type="project" value="UniProtKB-SubCell"/>
</dbReference>
<dbReference type="GO" id="GO:0051075">
    <property type="term" value="F:S-adenosylmethionine:tRNA ribosyltransferase-isomerase activity"/>
    <property type="evidence" value="ECO:0007669"/>
    <property type="project" value="UniProtKB-EC"/>
</dbReference>
<dbReference type="GO" id="GO:0008616">
    <property type="term" value="P:queuosine biosynthetic process"/>
    <property type="evidence" value="ECO:0007669"/>
    <property type="project" value="UniProtKB-UniRule"/>
</dbReference>
<dbReference type="GO" id="GO:0002099">
    <property type="term" value="P:tRNA wobble guanine modification"/>
    <property type="evidence" value="ECO:0007669"/>
    <property type="project" value="TreeGrafter"/>
</dbReference>
<dbReference type="FunFam" id="2.40.10.240:FF:000002">
    <property type="entry name" value="S-adenosylmethionine:tRNA ribosyltransferase-isomerase"/>
    <property type="match status" value="1"/>
</dbReference>
<dbReference type="FunFam" id="3.40.1780.10:FF:000001">
    <property type="entry name" value="S-adenosylmethionine:tRNA ribosyltransferase-isomerase"/>
    <property type="match status" value="1"/>
</dbReference>
<dbReference type="Gene3D" id="2.40.10.240">
    <property type="entry name" value="QueA-like"/>
    <property type="match status" value="1"/>
</dbReference>
<dbReference type="Gene3D" id="3.40.1780.10">
    <property type="entry name" value="QueA-like"/>
    <property type="match status" value="1"/>
</dbReference>
<dbReference type="HAMAP" id="MF_00113">
    <property type="entry name" value="QueA"/>
    <property type="match status" value="1"/>
</dbReference>
<dbReference type="InterPro" id="IPR003699">
    <property type="entry name" value="QueA"/>
</dbReference>
<dbReference type="InterPro" id="IPR042118">
    <property type="entry name" value="QueA_dom1"/>
</dbReference>
<dbReference type="InterPro" id="IPR042119">
    <property type="entry name" value="QueA_dom2"/>
</dbReference>
<dbReference type="InterPro" id="IPR036100">
    <property type="entry name" value="QueA_sf"/>
</dbReference>
<dbReference type="NCBIfam" id="NF001140">
    <property type="entry name" value="PRK00147.1"/>
    <property type="match status" value="1"/>
</dbReference>
<dbReference type="NCBIfam" id="TIGR00113">
    <property type="entry name" value="queA"/>
    <property type="match status" value="1"/>
</dbReference>
<dbReference type="PANTHER" id="PTHR30307">
    <property type="entry name" value="S-ADENOSYLMETHIONINE:TRNA RIBOSYLTRANSFERASE-ISOMERASE"/>
    <property type="match status" value="1"/>
</dbReference>
<dbReference type="PANTHER" id="PTHR30307:SF0">
    <property type="entry name" value="S-ADENOSYLMETHIONINE:TRNA RIBOSYLTRANSFERASE-ISOMERASE"/>
    <property type="match status" value="1"/>
</dbReference>
<dbReference type="Pfam" id="PF02547">
    <property type="entry name" value="Queuosine_synth"/>
    <property type="match status" value="1"/>
</dbReference>
<dbReference type="SUPFAM" id="SSF111337">
    <property type="entry name" value="QueA-like"/>
    <property type="match status" value="1"/>
</dbReference>
<organism>
    <name type="scientific">Streptococcus pyogenes serotype M28 (strain MGAS6180)</name>
    <dbReference type="NCBI Taxonomy" id="319701"/>
    <lineage>
        <taxon>Bacteria</taxon>
        <taxon>Bacillati</taxon>
        <taxon>Bacillota</taxon>
        <taxon>Bacilli</taxon>
        <taxon>Lactobacillales</taxon>
        <taxon>Streptococcaceae</taxon>
        <taxon>Streptococcus</taxon>
    </lineage>
</organism>
<name>QUEA_STRPM</name>
<comment type="function">
    <text evidence="1">Transfers and isomerizes the ribose moiety from AdoMet to the 7-aminomethyl group of 7-deazaguanine (preQ1-tRNA) to give epoxyqueuosine (oQ-tRNA).</text>
</comment>
<comment type="catalytic activity">
    <reaction evidence="1">
        <text>7-aminomethyl-7-carbaguanosine(34) in tRNA + S-adenosyl-L-methionine = epoxyqueuosine(34) in tRNA + adenine + L-methionine + 2 H(+)</text>
        <dbReference type="Rhea" id="RHEA:32155"/>
        <dbReference type="Rhea" id="RHEA-COMP:10342"/>
        <dbReference type="Rhea" id="RHEA-COMP:18582"/>
        <dbReference type="ChEBI" id="CHEBI:15378"/>
        <dbReference type="ChEBI" id="CHEBI:16708"/>
        <dbReference type="ChEBI" id="CHEBI:57844"/>
        <dbReference type="ChEBI" id="CHEBI:59789"/>
        <dbReference type="ChEBI" id="CHEBI:82833"/>
        <dbReference type="ChEBI" id="CHEBI:194443"/>
        <dbReference type="EC" id="2.4.99.17"/>
    </reaction>
</comment>
<comment type="pathway">
    <text evidence="1">tRNA modification; tRNA-queuosine biosynthesis.</text>
</comment>
<comment type="subunit">
    <text evidence="1">Monomer.</text>
</comment>
<comment type="subcellular location">
    <subcellularLocation>
        <location evidence="1">Cytoplasm</location>
    </subcellularLocation>
</comment>
<comment type="similarity">
    <text evidence="1">Belongs to the QueA family.</text>
</comment>
<reference key="1">
    <citation type="journal article" date="2005" name="J. Infect. Dis.">
        <title>Genome sequence of a serotype M28 strain of group A Streptococcus: potential new insights into puerperal sepsis and bacterial disease specificity.</title>
        <authorList>
            <person name="Green N.M."/>
            <person name="Zhang S."/>
            <person name="Porcella S.F."/>
            <person name="Nagiec M.J."/>
            <person name="Barbian K.D."/>
            <person name="Beres S.B."/>
            <person name="Lefebvre R.B."/>
            <person name="Musser J.M."/>
        </authorList>
    </citation>
    <scope>NUCLEOTIDE SEQUENCE [LARGE SCALE GENOMIC DNA]</scope>
    <source>
        <strain>MGAS6180</strain>
    </source>
</reference>
<protein>
    <recommendedName>
        <fullName evidence="1">S-adenosylmethionine:tRNA ribosyltransferase-isomerase</fullName>
        <ecNumber evidence="1">2.4.99.17</ecNumber>
    </recommendedName>
    <alternativeName>
        <fullName evidence="1">Queuosine biosynthesis protein QueA</fullName>
    </alternativeName>
</protein>
<evidence type="ECO:0000255" key="1">
    <source>
        <dbReference type="HAMAP-Rule" id="MF_00113"/>
    </source>
</evidence>
<feature type="chain" id="PRO_0000231379" description="S-adenosylmethionine:tRNA ribosyltransferase-isomerase">
    <location>
        <begin position="1"/>
        <end position="342"/>
    </location>
</feature>